<proteinExistence type="inferred from homology"/>
<sequence length="143" mass="16017">MGRRQARETALQVLFQIDLGKTEPDLALNNTAEEFGAGPQEIEFARQLVMGTLEHIEEIDAMIGKVSKEWQLNRMANVDRNIMRLAIFEMNYRADIPKSVSVNEALELSKIFGTPDSVRFINGILGKLLDNKDEAAPVISSLE</sequence>
<keyword id="KW-1185">Reference proteome</keyword>
<keyword id="KW-0694">RNA-binding</keyword>
<keyword id="KW-0804">Transcription</keyword>
<keyword id="KW-0889">Transcription antitermination</keyword>
<keyword id="KW-0805">Transcription regulation</keyword>
<dbReference type="EMBL" id="CP000612">
    <property type="protein sequence ID" value="ABO49604.1"/>
    <property type="molecule type" value="Genomic_DNA"/>
</dbReference>
<dbReference type="RefSeq" id="WP_011877430.1">
    <property type="nucleotide sequence ID" value="NC_009253.1"/>
</dbReference>
<dbReference type="SMR" id="A4J3F1"/>
<dbReference type="STRING" id="349161.Dred_1069"/>
<dbReference type="KEGG" id="drm:Dred_1069"/>
<dbReference type="eggNOG" id="COG0781">
    <property type="taxonomic scope" value="Bacteria"/>
</dbReference>
<dbReference type="HOGENOM" id="CLU_087843_3_3_9"/>
<dbReference type="OrthoDB" id="9811381at2"/>
<dbReference type="Proteomes" id="UP000001556">
    <property type="component" value="Chromosome"/>
</dbReference>
<dbReference type="GO" id="GO:0005829">
    <property type="term" value="C:cytosol"/>
    <property type="evidence" value="ECO:0007669"/>
    <property type="project" value="TreeGrafter"/>
</dbReference>
<dbReference type="GO" id="GO:0003723">
    <property type="term" value="F:RNA binding"/>
    <property type="evidence" value="ECO:0007669"/>
    <property type="project" value="UniProtKB-UniRule"/>
</dbReference>
<dbReference type="GO" id="GO:0006353">
    <property type="term" value="P:DNA-templated transcription termination"/>
    <property type="evidence" value="ECO:0007669"/>
    <property type="project" value="UniProtKB-UniRule"/>
</dbReference>
<dbReference type="GO" id="GO:0031564">
    <property type="term" value="P:transcription antitermination"/>
    <property type="evidence" value="ECO:0007669"/>
    <property type="project" value="UniProtKB-KW"/>
</dbReference>
<dbReference type="CDD" id="cd00619">
    <property type="entry name" value="Terminator_NusB"/>
    <property type="match status" value="1"/>
</dbReference>
<dbReference type="Gene3D" id="1.10.940.10">
    <property type="entry name" value="NusB-like"/>
    <property type="match status" value="1"/>
</dbReference>
<dbReference type="HAMAP" id="MF_00073">
    <property type="entry name" value="NusB"/>
    <property type="match status" value="1"/>
</dbReference>
<dbReference type="InterPro" id="IPR035926">
    <property type="entry name" value="NusB-like_sf"/>
</dbReference>
<dbReference type="InterPro" id="IPR011605">
    <property type="entry name" value="NusB_fam"/>
</dbReference>
<dbReference type="InterPro" id="IPR006027">
    <property type="entry name" value="NusB_RsmB_TIM44"/>
</dbReference>
<dbReference type="NCBIfam" id="TIGR01951">
    <property type="entry name" value="nusB"/>
    <property type="match status" value="1"/>
</dbReference>
<dbReference type="PANTHER" id="PTHR11078:SF3">
    <property type="entry name" value="ANTITERMINATION NUSB DOMAIN-CONTAINING PROTEIN"/>
    <property type="match status" value="1"/>
</dbReference>
<dbReference type="PANTHER" id="PTHR11078">
    <property type="entry name" value="N UTILIZATION SUBSTANCE PROTEIN B-RELATED"/>
    <property type="match status" value="1"/>
</dbReference>
<dbReference type="Pfam" id="PF01029">
    <property type="entry name" value="NusB"/>
    <property type="match status" value="1"/>
</dbReference>
<dbReference type="SUPFAM" id="SSF48013">
    <property type="entry name" value="NusB-like"/>
    <property type="match status" value="1"/>
</dbReference>
<comment type="function">
    <text evidence="1">Involved in transcription antitermination. Required for transcription of ribosomal RNA (rRNA) genes. Binds specifically to the boxA antiterminator sequence of the ribosomal RNA (rrn) operons.</text>
</comment>
<comment type="similarity">
    <text evidence="1">Belongs to the NusB family.</text>
</comment>
<protein>
    <recommendedName>
        <fullName evidence="1">Transcription antitermination protein NusB</fullName>
    </recommendedName>
    <alternativeName>
        <fullName evidence="1">Antitermination factor NusB</fullName>
    </alternativeName>
</protein>
<organism>
    <name type="scientific">Desulforamulus reducens (strain ATCC BAA-1160 / DSM 100696 / MI-1)</name>
    <name type="common">Desulfotomaculum reducens</name>
    <dbReference type="NCBI Taxonomy" id="349161"/>
    <lineage>
        <taxon>Bacteria</taxon>
        <taxon>Bacillati</taxon>
        <taxon>Bacillota</taxon>
        <taxon>Clostridia</taxon>
        <taxon>Eubacteriales</taxon>
        <taxon>Peptococcaceae</taxon>
        <taxon>Desulforamulus</taxon>
    </lineage>
</organism>
<reference key="1">
    <citation type="submission" date="2007-03" db="EMBL/GenBank/DDBJ databases">
        <title>Complete sequence of Desulfotomaculum reducens MI-1.</title>
        <authorList>
            <consortium name="US DOE Joint Genome Institute"/>
            <person name="Copeland A."/>
            <person name="Lucas S."/>
            <person name="Lapidus A."/>
            <person name="Barry K."/>
            <person name="Detter J.C."/>
            <person name="Glavina del Rio T."/>
            <person name="Hammon N."/>
            <person name="Israni S."/>
            <person name="Dalin E."/>
            <person name="Tice H."/>
            <person name="Pitluck S."/>
            <person name="Sims D."/>
            <person name="Brettin T."/>
            <person name="Bruce D."/>
            <person name="Han C."/>
            <person name="Tapia R."/>
            <person name="Schmutz J."/>
            <person name="Larimer F."/>
            <person name="Land M."/>
            <person name="Hauser L."/>
            <person name="Kyrpides N."/>
            <person name="Kim E."/>
            <person name="Tebo B.M."/>
            <person name="Richardson P."/>
        </authorList>
    </citation>
    <scope>NUCLEOTIDE SEQUENCE [LARGE SCALE GENOMIC DNA]</scope>
    <source>
        <strain>ATCC BAA-1160 / DSM 100696 / MI-1</strain>
    </source>
</reference>
<accession>A4J3F1</accession>
<feature type="chain" id="PRO_1000071191" description="Transcription antitermination protein NusB">
    <location>
        <begin position="1"/>
        <end position="143"/>
    </location>
</feature>
<evidence type="ECO:0000255" key="1">
    <source>
        <dbReference type="HAMAP-Rule" id="MF_00073"/>
    </source>
</evidence>
<name>NUSB_DESRM</name>
<gene>
    <name evidence="1" type="primary">nusB</name>
    <name type="ordered locus">Dred_1069</name>
</gene>